<feature type="chain" id="PRO_0000256018" description="Pre-mRNA-splicing ATP-dependent RNA helicase PRP28">
    <location>
        <begin position="1"/>
        <end position="820"/>
    </location>
</feature>
<feature type="domain" description="Helicase ATP-binding" evidence="2">
    <location>
        <begin position="411"/>
        <end position="616"/>
    </location>
</feature>
<feature type="domain" description="Helicase C-terminal" evidence="3">
    <location>
        <begin position="627"/>
        <end position="790"/>
    </location>
</feature>
<feature type="region of interest" description="Disordered" evidence="4">
    <location>
        <begin position="1"/>
        <end position="70"/>
    </location>
</feature>
<feature type="region of interest" description="Disordered" evidence="4">
    <location>
        <begin position="101"/>
        <end position="255"/>
    </location>
</feature>
<feature type="region of interest" description="Disordered" evidence="4">
    <location>
        <begin position="784"/>
        <end position="820"/>
    </location>
</feature>
<feature type="short sequence motif" description="Q motif">
    <location>
        <begin position="380"/>
        <end position="408"/>
    </location>
</feature>
<feature type="short sequence motif" description="DEAD box">
    <location>
        <begin position="539"/>
        <end position="542"/>
    </location>
</feature>
<feature type="compositionally biased region" description="Pro residues" evidence="4">
    <location>
        <begin position="12"/>
        <end position="62"/>
    </location>
</feature>
<feature type="compositionally biased region" description="Basic and acidic residues" evidence="4">
    <location>
        <begin position="116"/>
        <end position="136"/>
    </location>
</feature>
<feature type="compositionally biased region" description="Polar residues" evidence="4">
    <location>
        <begin position="159"/>
        <end position="178"/>
    </location>
</feature>
<feature type="binding site" evidence="2">
    <location>
        <begin position="424"/>
        <end position="431"/>
    </location>
    <ligand>
        <name>ATP</name>
        <dbReference type="ChEBI" id="CHEBI:30616"/>
    </ligand>
</feature>
<proteinExistence type="inferred from homology"/>
<dbReference type="EC" id="3.6.4.13"/>
<dbReference type="EMBL" id="GG704913">
    <property type="protein sequence ID" value="EAS29589.2"/>
    <property type="status" value="ALT_INIT"/>
    <property type="molecule type" value="Genomic_DNA"/>
</dbReference>
<dbReference type="RefSeq" id="XP_001241172.2">
    <property type="nucleotide sequence ID" value="XM_001241171.2"/>
</dbReference>
<dbReference type="SMR" id="Q1DMX8"/>
<dbReference type="FunCoup" id="Q1DMX8">
    <property type="interactions" value="890"/>
</dbReference>
<dbReference type="STRING" id="246410.Q1DMX8"/>
<dbReference type="GeneID" id="4560364"/>
<dbReference type="KEGG" id="cim:CIMG_08335"/>
<dbReference type="InParanoid" id="Q1DMX8"/>
<dbReference type="OrthoDB" id="196131at2759"/>
<dbReference type="Proteomes" id="UP000001261">
    <property type="component" value="Unassembled WGS sequence"/>
</dbReference>
<dbReference type="GO" id="GO:0005737">
    <property type="term" value="C:cytoplasm"/>
    <property type="evidence" value="ECO:0007669"/>
    <property type="project" value="UniProtKB-SubCell"/>
</dbReference>
<dbReference type="GO" id="GO:0005634">
    <property type="term" value="C:nucleus"/>
    <property type="evidence" value="ECO:0007669"/>
    <property type="project" value="UniProtKB-SubCell"/>
</dbReference>
<dbReference type="GO" id="GO:0005524">
    <property type="term" value="F:ATP binding"/>
    <property type="evidence" value="ECO:0007669"/>
    <property type="project" value="UniProtKB-KW"/>
</dbReference>
<dbReference type="GO" id="GO:0016887">
    <property type="term" value="F:ATP hydrolysis activity"/>
    <property type="evidence" value="ECO:0007669"/>
    <property type="project" value="RHEA"/>
</dbReference>
<dbReference type="GO" id="GO:0003676">
    <property type="term" value="F:nucleic acid binding"/>
    <property type="evidence" value="ECO:0007669"/>
    <property type="project" value="InterPro"/>
</dbReference>
<dbReference type="GO" id="GO:0003724">
    <property type="term" value="F:RNA helicase activity"/>
    <property type="evidence" value="ECO:0007669"/>
    <property type="project" value="UniProtKB-EC"/>
</dbReference>
<dbReference type="GO" id="GO:0006397">
    <property type="term" value="P:mRNA processing"/>
    <property type="evidence" value="ECO:0007669"/>
    <property type="project" value="UniProtKB-KW"/>
</dbReference>
<dbReference type="GO" id="GO:0008380">
    <property type="term" value="P:RNA splicing"/>
    <property type="evidence" value="ECO:0007669"/>
    <property type="project" value="UniProtKB-KW"/>
</dbReference>
<dbReference type="CDD" id="cd17945">
    <property type="entry name" value="DEADc_DDX23"/>
    <property type="match status" value="1"/>
</dbReference>
<dbReference type="CDD" id="cd18787">
    <property type="entry name" value="SF2_C_DEAD"/>
    <property type="match status" value="1"/>
</dbReference>
<dbReference type="FunFam" id="3.40.50.300:FF:000322">
    <property type="entry name" value="probable ATP-dependent RNA helicase DDX23"/>
    <property type="match status" value="1"/>
</dbReference>
<dbReference type="Gene3D" id="3.40.50.300">
    <property type="entry name" value="P-loop containing nucleotide triphosphate hydrolases"/>
    <property type="match status" value="2"/>
</dbReference>
<dbReference type="InterPro" id="IPR011545">
    <property type="entry name" value="DEAD/DEAH_box_helicase_dom"/>
</dbReference>
<dbReference type="InterPro" id="IPR014001">
    <property type="entry name" value="Helicase_ATP-bd"/>
</dbReference>
<dbReference type="InterPro" id="IPR001650">
    <property type="entry name" value="Helicase_C-like"/>
</dbReference>
<dbReference type="InterPro" id="IPR027417">
    <property type="entry name" value="P-loop_NTPase"/>
</dbReference>
<dbReference type="InterPro" id="IPR000629">
    <property type="entry name" value="RNA-helicase_DEAD-box_CS"/>
</dbReference>
<dbReference type="InterPro" id="IPR014014">
    <property type="entry name" value="RNA_helicase_DEAD_Q_motif"/>
</dbReference>
<dbReference type="PANTHER" id="PTHR47958">
    <property type="entry name" value="ATP-DEPENDENT RNA HELICASE DBP3"/>
    <property type="match status" value="1"/>
</dbReference>
<dbReference type="Pfam" id="PF25430">
    <property type="entry name" value="DDX23"/>
    <property type="match status" value="1"/>
</dbReference>
<dbReference type="Pfam" id="PF00270">
    <property type="entry name" value="DEAD"/>
    <property type="match status" value="1"/>
</dbReference>
<dbReference type="Pfam" id="PF00271">
    <property type="entry name" value="Helicase_C"/>
    <property type="match status" value="1"/>
</dbReference>
<dbReference type="PRINTS" id="PR01217">
    <property type="entry name" value="PRICHEXTENSN"/>
</dbReference>
<dbReference type="SMART" id="SM00487">
    <property type="entry name" value="DEXDc"/>
    <property type="match status" value="1"/>
</dbReference>
<dbReference type="SMART" id="SM00490">
    <property type="entry name" value="HELICc"/>
    <property type="match status" value="1"/>
</dbReference>
<dbReference type="SUPFAM" id="SSF52540">
    <property type="entry name" value="P-loop containing nucleoside triphosphate hydrolases"/>
    <property type="match status" value="1"/>
</dbReference>
<dbReference type="PROSITE" id="PS00039">
    <property type="entry name" value="DEAD_ATP_HELICASE"/>
    <property type="match status" value="1"/>
</dbReference>
<dbReference type="PROSITE" id="PS51192">
    <property type="entry name" value="HELICASE_ATP_BIND_1"/>
    <property type="match status" value="1"/>
</dbReference>
<dbReference type="PROSITE" id="PS51194">
    <property type="entry name" value="HELICASE_CTER"/>
    <property type="match status" value="1"/>
</dbReference>
<dbReference type="PROSITE" id="PS51195">
    <property type="entry name" value="Q_MOTIF"/>
    <property type="match status" value="1"/>
</dbReference>
<gene>
    <name type="primary">PRP28</name>
    <name type="ORF">CIMG_08335</name>
</gene>
<accession>Q1DMX8</accession>
<accession>J3K5Z7</accession>
<sequence>MDGMLTEGTSAIPPPQPPLEPIERPPTPPPLPPDESALPPPPTDPAPPPPPPDSLAPPPPPEDVPRSTYTVPVVVKKKKVGWGSSKSTTPLSVEELLRKKKEADEAASRPKFLTKSQREKLALEKRAKEIEHERRIRAASTNGSMMSDSNGGGGNSNGRASPTTRYDNVNGSSRTSIPTAPRALRGEIPTAPAAMRSSQAKNNDPRPGNKVPSDSAATGEKRTAPEDAQALLTRQRYMGADQTSSFSAKKKRRRTTERKFNFEWNADEDTSPDYNPLYQNRSEMNFFGRGRLAGFSDDVVDSAAKRYAKALEDRDLEAGSARAREILEMERRRREEGGRNGLDLHWSQKRLDQMRERDWRIFKEDFNISTKGGSIPNPMRSWGESGLPKRLLEIIDKVGYKDPSPIQRAAIPIALQNRDLIGVAVTGSGKTAAFLLPLLVYIAELPRLDEFEWRKSDGPYAIILAPTRELAQQIENEARKFCNPLGFNVVSIVGGHSLEEQSFSLRNGAEIIIATPGRLVDCIERRILVLSQCCYVIMDEADRMIDLGFEEPVNKILDALPVSNEKPDTEEAEDARAMSQHLGGKDRYRQTMMYTATMPSAVERIARKYLRRPAIVTIGNIGEAVDTVEQRVEFISGEDKRKKRLADILASGEFRPPIIVFVNIKRNCDAVARDIKQMGYSSVTLHGSKTQEQREAALASVRNGNTDVLVATDLAGRGIDVPDVSLVVNFNMATNIESYTHRIGRTGRAGKSGVAITFLGNEDADVMYDLKQMLMKSSISRVPEELRKHEAAQSKPTKAGGGQKRLDEGGMSAPKTGSGW</sequence>
<reference key="1">
    <citation type="journal article" date="2009" name="Genome Res.">
        <title>Comparative genomic analyses of the human fungal pathogens Coccidioides and their relatives.</title>
        <authorList>
            <person name="Sharpton T.J."/>
            <person name="Stajich J.E."/>
            <person name="Rounsley S.D."/>
            <person name="Gardner M.J."/>
            <person name="Wortman J.R."/>
            <person name="Jordar V.S."/>
            <person name="Maiti R."/>
            <person name="Kodira C.D."/>
            <person name="Neafsey D.E."/>
            <person name="Zeng Q."/>
            <person name="Hung C.-Y."/>
            <person name="McMahan C."/>
            <person name="Muszewska A."/>
            <person name="Grynberg M."/>
            <person name="Mandel M.A."/>
            <person name="Kellner E.M."/>
            <person name="Barker B.M."/>
            <person name="Galgiani J.N."/>
            <person name="Orbach M.J."/>
            <person name="Kirkland T.N."/>
            <person name="Cole G.T."/>
            <person name="Henn M.R."/>
            <person name="Birren B.W."/>
            <person name="Taylor J.W."/>
        </authorList>
    </citation>
    <scope>NUCLEOTIDE SEQUENCE [LARGE SCALE GENOMIC DNA]</scope>
    <source>
        <strain>RS</strain>
    </source>
</reference>
<reference key="2">
    <citation type="journal article" date="2010" name="Genome Res.">
        <title>Population genomic sequencing of Coccidioides fungi reveals recent hybridization and transposon control.</title>
        <authorList>
            <person name="Neafsey D.E."/>
            <person name="Barker B.M."/>
            <person name="Sharpton T.J."/>
            <person name="Stajich J.E."/>
            <person name="Park D.J."/>
            <person name="Whiston E."/>
            <person name="Hung C.-Y."/>
            <person name="McMahan C."/>
            <person name="White J."/>
            <person name="Sykes S."/>
            <person name="Heiman D."/>
            <person name="Young S."/>
            <person name="Zeng Q."/>
            <person name="Abouelleil A."/>
            <person name="Aftuck L."/>
            <person name="Bessette D."/>
            <person name="Brown A."/>
            <person name="FitzGerald M."/>
            <person name="Lui A."/>
            <person name="Macdonald J.P."/>
            <person name="Priest M."/>
            <person name="Orbach M.J."/>
            <person name="Galgiani J.N."/>
            <person name="Kirkland T.N."/>
            <person name="Cole G.T."/>
            <person name="Birren B.W."/>
            <person name="Henn M.R."/>
            <person name="Taylor J.W."/>
            <person name="Rounsley S.D."/>
        </authorList>
    </citation>
    <scope>GENOME REANNOTATION</scope>
    <source>
        <strain>RS</strain>
    </source>
</reference>
<name>PRP28_COCIM</name>
<protein>
    <recommendedName>
        <fullName>Pre-mRNA-splicing ATP-dependent RNA helicase PRP28</fullName>
        <ecNumber>3.6.4.13</ecNumber>
    </recommendedName>
</protein>
<comment type="function">
    <text evidence="1">ATP-dependent RNA helicase involved in mRNA splicing. May destabilize the U1/5'-splice site duplex to permit an effective competition for the 5'-splice site by the U6 snRNA, resulting in the switch between U1 and U6 at the 5'-splice site. May also act to unwind the U4/U6 base-pairing interaction in the U4/U6/U5 snRNP, facilitating the first covalent step of splicing (By similarity).</text>
</comment>
<comment type="catalytic activity">
    <reaction>
        <text>ATP + H2O = ADP + phosphate + H(+)</text>
        <dbReference type="Rhea" id="RHEA:13065"/>
        <dbReference type="ChEBI" id="CHEBI:15377"/>
        <dbReference type="ChEBI" id="CHEBI:15378"/>
        <dbReference type="ChEBI" id="CHEBI:30616"/>
        <dbReference type="ChEBI" id="CHEBI:43474"/>
        <dbReference type="ChEBI" id="CHEBI:456216"/>
        <dbReference type="EC" id="3.6.4.13"/>
    </reaction>
</comment>
<comment type="subunit">
    <text evidence="1">Component of the U5 snRNP complex.</text>
</comment>
<comment type="subcellular location">
    <subcellularLocation>
        <location evidence="1">Cytoplasm</location>
    </subcellularLocation>
    <subcellularLocation>
        <location evidence="1">Nucleus</location>
    </subcellularLocation>
</comment>
<comment type="domain">
    <text>The Q motif is unique to and characteristic of the DEAD box family of RNA helicases and controls ATP binding and hydrolysis.</text>
</comment>
<comment type="similarity">
    <text evidence="5">Belongs to the DEAD box helicase family. DDX23/PRP28 subfamily.</text>
</comment>
<comment type="sequence caution" evidence="5">
    <conflict type="erroneous initiation">
        <sequence resource="EMBL-CDS" id="EAS29589"/>
    </conflict>
    <text>Extended N-terminus.</text>
</comment>
<evidence type="ECO:0000250" key="1"/>
<evidence type="ECO:0000255" key="2">
    <source>
        <dbReference type="PROSITE-ProRule" id="PRU00541"/>
    </source>
</evidence>
<evidence type="ECO:0000255" key="3">
    <source>
        <dbReference type="PROSITE-ProRule" id="PRU00542"/>
    </source>
</evidence>
<evidence type="ECO:0000256" key="4">
    <source>
        <dbReference type="SAM" id="MobiDB-lite"/>
    </source>
</evidence>
<evidence type="ECO:0000305" key="5"/>
<keyword id="KW-0067">ATP-binding</keyword>
<keyword id="KW-0963">Cytoplasm</keyword>
<keyword id="KW-0347">Helicase</keyword>
<keyword id="KW-0378">Hydrolase</keyword>
<keyword id="KW-0507">mRNA processing</keyword>
<keyword id="KW-0508">mRNA splicing</keyword>
<keyword id="KW-0547">Nucleotide-binding</keyword>
<keyword id="KW-0539">Nucleus</keyword>
<keyword id="KW-1185">Reference proteome</keyword>
<organism>
    <name type="scientific">Coccidioides immitis (strain RS)</name>
    <name type="common">Valley fever fungus</name>
    <dbReference type="NCBI Taxonomy" id="246410"/>
    <lineage>
        <taxon>Eukaryota</taxon>
        <taxon>Fungi</taxon>
        <taxon>Dikarya</taxon>
        <taxon>Ascomycota</taxon>
        <taxon>Pezizomycotina</taxon>
        <taxon>Eurotiomycetes</taxon>
        <taxon>Eurotiomycetidae</taxon>
        <taxon>Onygenales</taxon>
        <taxon>Onygenaceae</taxon>
        <taxon>Coccidioides</taxon>
    </lineage>
</organism>